<dbReference type="EC" id="2.7.7.6" evidence="1"/>
<dbReference type="EMBL" id="CP001050">
    <property type="protein sequence ID" value="ACF31022.1"/>
    <property type="molecule type" value="Genomic_DNA"/>
</dbReference>
<dbReference type="RefSeq" id="WP_003690105.1">
    <property type="nucleotide sequence ID" value="NC_011035.1"/>
</dbReference>
<dbReference type="SMR" id="B4RQW2"/>
<dbReference type="GeneID" id="66754280"/>
<dbReference type="KEGG" id="ngk:NGK_2420"/>
<dbReference type="HOGENOM" id="CLU_000524_4_3_4"/>
<dbReference type="Proteomes" id="UP000002564">
    <property type="component" value="Chromosome"/>
</dbReference>
<dbReference type="GO" id="GO:0000428">
    <property type="term" value="C:DNA-directed RNA polymerase complex"/>
    <property type="evidence" value="ECO:0007669"/>
    <property type="project" value="UniProtKB-KW"/>
</dbReference>
<dbReference type="GO" id="GO:0003677">
    <property type="term" value="F:DNA binding"/>
    <property type="evidence" value="ECO:0007669"/>
    <property type="project" value="UniProtKB-UniRule"/>
</dbReference>
<dbReference type="GO" id="GO:0003899">
    <property type="term" value="F:DNA-directed RNA polymerase activity"/>
    <property type="evidence" value="ECO:0007669"/>
    <property type="project" value="UniProtKB-UniRule"/>
</dbReference>
<dbReference type="GO" id="GO:0032549">
    <property type="term" value="F:ribonucleoside binding"/>
    <property type="evidence" value="ECO:0007669"/>
    <property type="project" value="InterPro"/>
</dbReference>
<dbReference type="GO" id="GO:0006351">
    <property type="term" value="P:DNA-templated transcription"/>
    <property type="evidence" value="ECO:0007669"/>
    <property type="project" value="UniProtKB-UniRule"/>
</dbReference>
<dbReference type="CDD" id="cd00653">
    <property type="entry name" value="RNA_pol_B_RPB2"/>
    <property type="match status" value="1"/>
</dbReference>
<dbReference type="FunFam" id="2.30.150.10:FF:000001">
    <property type="entry name" value="DNA-directed RNA polymerase subunit beta"/>
    <property type="match status" value="1"/>
</dbReference>
<dbReference type="FunFam" id="2.40.50.100:FF:000006">
    <property type="entry name" value="DNA-directed RNA polymerase subunit beta"/>
    <property type="match status" value="1"/>
</dbReference>
<dbReference type="FunFam" id="2.40.50.150:FF:000001">
    <property type="entry name" value="DNA-directed RNA polymerase subunit beta"/>
    <property type="match status" value="1"/>
</dbReference>
<dbReference type="FunFam" id="3.90.1110.10:FF:000001">
    <property type="entry name" value="DNA-directed RNA polymerase subunit beta"/>
    <property type="match status" value="1"/>
</dbReference>
<dbReference type="FunFam" id="3.90.1110.10:FF:000004">
    <property type="entry name" value="DNA-directed RNA polymerase subunit beta"/>
    <property type="match status" value="1"/>
</dbReference>
<dbReference type="FunFam" id="3.90.1800.10:FF:000001">
    <property type="entry name" value="DNA-directed RNA polymerase subunit beta"/>
    <property type="match status" value="1"/>
</dbReference>
<dbReference type="Gene3D" id="2.40.50.100">
    <property type="match status" value="1"/>
</dbReference>
<dbReference type="Gene3D" id="2.40.50.150">
    <property type="match status" value="1"/>
</dbReference>
<dbReference type="Gene3D" id="3.90.1100.10">
    <property type="match status" value="2"/>
</dbReference>
<dbReference type="Gene3D" id="2.30.150.10">
    <property type="entry name" value="DNA-directed RNA polymerase, beta subunit, external 1 domain"/>
    <property type="match status" value="1"/>
</dbReference>
<dbReference type="Gene3D" id="2.40.270.10">
    <property type="entry name" value="DNA-directed RNA polymerase, subunit 2, domain 6"/>
    <property type="match status" value="2"/>
</dbReference>
<dbReference type="Gene3D" id="3.90.1800.10">
    <property type="entry name" value="RNA polymerase alpha subunit dimerisation domain"/>
    <property type="match status" value="1"/>
</dbReference>
<dbReference type="Gene3D" id="3.90.1110.10">
    <property type="entry name" value="RNA polymerase Rpb2, domain 2"/>
    <property type="match status" value="2"/>
</dbReference>
<dbReference type="HAMAP" id="MF_01321">
    <property type="entry name" value="RNApol_bact_RpoB"/>
    <property type="match status" value="1"/>
</dbReference>
<dbReference type="InterPro" id="IPR042107">
    <property type="entry name" value="DNA-dir_RNA_pol_bsu_ext_1_sf"/>
</dbReference>
<dbReference type="InterPro" id="IPR019462">
    <property type="entry name" value="DNA-dir_RNA_pol_bsu_external_1"/>
</dbReference>
<dbReference type="InterPro" id="IPR015712">
    <property type="entry name" value="DNA-dir_RNA_pol_su2"/>
</dbReference>
<dbReference type="InterPro" id="IPR007120">
    <property type="entry name" value="DNA-dir_RNAP_su2_dom"/>
</dbReference>
<dbReference type="InterPro" id="IPR037033">
    <property type="entry name" value="DNA-dir_RNAP_su2_hyb_sf"/>
</dbReference>
<dbReference type="InterPro" id="IPR010243">
    <property type="entry name" value="RNA_pol_bsu_bac"/>
</dbReference>
<dbReference type="InterPro" id="IPR007121">
    <property type="entry name" value="RNA_pol_bsu_CS"/>
</dbReference>
<dbReference type="InterPro" id="IPR007644">
    <property type="entry name" value="RNA_pol_bsu_protrusion"/>
</dbReference>
<dbReference type="InterPro" id="IPR007642">
    <property type="entry name" value="RNA_pol_Rpb2_2"/>
</dbReference>
<dbReference type="InterPro" id="IPR037034">
    <property type="entry name" value="RNA_pol_Rpb2_2_sf"/>
</dbReference>
<dbReference type="InterPro" id="IPR007645">
    <property type="entry name" value="RNA_pol_Rpb2_3"/>
</dbReference>
<dbReference type="InterPro" id="IPR007641">
    <property type="entry name" value="RNA_pol_Rpb2_7"/>
</dbReference>
<dbReference type="InterPro" id="IPR014724">
    <property type="entry name" value="RNA_pol_RPB2_OB-fold"/>
</dbReference>
<dbReference type="NCBIfam" id="NF001616">
    <property type="entry name" value="PRK00405.1"/>
    <property type="match status" value="1"/>
</dbReference>
<dbReference type="NCBIfam" id="TIGR02013">
    <property type="entry name" value="rpoB"/>
    <property type="match status" value="1"/>
</dbReference>
<dbReference type="PANTHER" id="PTHR20856">
    <property type="entry name" value="DNA-DIRECTED RNA POLYMERASE I SUBUNIT 2"/>
    <property type="match status" value="1"/>
</dbReference>
<dbReference type="Pfam" id="PF04563">
    <property type="entry name" value="RNA_pol_Rpb2_1"/>
    <property type="match status" value="1"/>
</dbReference>
<dbReference type="Pfam" id="PF04561">
    <property type="entry name" value="RNA_pol_Rpb2_2"/>
    <property type="match status" value="2"/>
</dbReference>
<dbReference type="Pfam" id="PF04565">
    <property type="entry name" value="RNA_pol_Rpb2_3"/>
    <property type="match status" value="1"/>
</dbReference>
<dbReference type="Pfam" id="PF10385">
    <property type="entry name" value="RNA_pol_Rpb2_45"/>
    <property type="match status" value="1"/>
</dbReference>
<dbReference type="Pfam" id="PF00562">
    <property type="entry name" value="RNA_pol_Rpb2_6"/>
    <property type="match status" value="1"/>
</dbReference>
<dbReference type="Pfam" id="PF04560">
    <property type="entry name" value="RNA_pol_Rpb2_7"/>
    <property type="match status" value="1"/>
</dbReference>
<dbReference type="SUPFAM" id="SSF64484">
    <property type="entry name" value="beta and beta-prime subunits of DNA dependent RNA-polymerase"/>
    <property type="match status" value="1"/>
</dbReference>
<dbReference type="PROSITE" id="PS01166">
    <property type="entry name" value="RNA_POL_BETA"/>
    <property type="match status" value="1"/>
</dbReference>
<sequence>MNYSFTEKKRIRKSFAKRENVLEVPFLLATQIDSYAKFLQLENAFDKRTDDGLQAAFNSIFPIVSHNGYARLEFVYYTLGEPLFDIPECQLRGITYAAPLRARIRLVILDKEASKPTVKEVRENEVYMGEIPLMTPSGSFVINGTERVIVSQLHRSPGVFFEHDKGKTHSSGKLLFSARIIPYRGSWLDFEFDPKDLLYFRIDRRRKMPVTILLKALGYNNEQILDIFYDKETFYLSSNGVQTDLVAGRLKGETAKVDILDKEGNVLVAKGKRITAKNIRDITNAGLTRLDVEQESLLGKALAADLIDSETGEVLASANDEITEELLAKFDINGVKEITTLYINELDQGAYISNTLRTDETAGRQAARVAIYRMMRPGEPPTEEAVEQLFNRLFFSEDSYDLSRVGRMKFNTRTYEQKLSEAQQNSWYGRLLNETFAGAADKGGYVLSVEDIVASIATLVELRNGHGEVDDIDHLGNRRVRSVGELTENQFRSGLARVERAVKERLNQAESENLMPHDLINAKPVSAAIKEFFGSSQLSQFMDQTNPLSEVTHKRRVSALGPGGLTRERAGFEVRDVHPTHYGRVCPIETPEGPNIGLINSLSVYARTNDYGFLETPYRRVIDGKVTEEIDYLSAIEEGRYVIAQANADLDSDGNLIGDLVTCREKGETIMATPDRVQYMDVATGQVVSVAASLIPFLEHDDANRALMGANMQRQAVPCLRPEKPMVGTGIERSVAVDSATAIVARRGGVVEYVDANRVVIRVHDDEATAGEVGVDIYNLVKFTRSNQSTNINQRPAVKAGDVLQRGDLVADGASTDLGELALGQNMTIAFMPWNGYNYEDSILISEKVAADDRYTSIHIEELNVVARDTKLGAEDITRDIPNLSERMQNRLDESGIVYIGAEVEAGDVLVGKVTPKGETQLTPEEKLLRAIFGEKASDVKDTSLRMPTGMSGTVIDVQVFTREGIQRDKRAQSIIDSELKRYRLDLNDQLRIFDNDAFDRIERMIVGQKANGGPMKLAKGSEITTEYLAGLPSRHDWFDIRLTDEDLAKQLELIKLSLQQKREEADELYEIKKKKLTQGDELQPGVQKMVKVFIAIKRRLQAGDKMAGRHGNKGVVSRILPVEDMPYMADGRPVDIVLNPLGVPSRMNIGQILEVHLGWAAKGIGERIDRMLKERRKAGELREFLNKLYNGSGKKEDLDSLTDEEIIELASNLRKGASFASPVFDGAKESEIREMLNLAYPSEDPEVEKLGFNDSKTQITLYDGRSGEAFDRKVTVGVMHYLKLHHLVDEKMHARSTGPYSLVTQQPLGGKAQFGGQRFGEMEVWALEAYGAAYTLQEMLTVKSDDVNGRTKMYENIVKGEHKIDAGMPESFNVLVKEIRSLGLDIDLERY</sequence>
<proteinExistence type="inferred from homology"/>
<comment type="function">
    <text evidence="1">DNA-dependent RNA polymerase catalyzes the transcription of DNA into RNA using the four ribonucleoside triphosphates as substrates.</text>
</comment>
<comment type="catalytic activity">
    <reaction evidence="1">
        <text>RNA(n) + a ribonucleoside 5'-triphosphate = RNA(n+1) + diphosphate</text>
        <dbReference type="Rhea" id="RHEA:21248"/>
        <dbReference type="Rhea" id="RHEA-COMP:14527"/>
        <dbReference type="Rhea" id="RHEA-COMP:17342"/>
        <dbReference type="ChEBI" id="CHEBI:33019"/>
        <dbReference type="ChEBI" id="CHEBI:61557"/>
        <dbReference type="ChEBI" id="CHEBI:140395"/>
        <dbReference type="EC" id="2.7.7.6"/>
    </reaction>
</comment>
<comment type="subunit">
    <text evidence="1">The RNAP catalytic core consists of 2 alpha, 1 beta, 1 beta' and 1 omega subunit. When a sigma factor is associated with the core the holoenzyme is formed, which can initiate transcription.</text>
</comment>
<comment type="similarity">
    <text evidence="1">Belongs to the RNA polymerase beta chain family.</text>
</comment>
<organism>
    <name type="scientific">Neisseria gonorrhoeae (strain NCCP11945)</name>
    <dbReference type="NCBI Taxonomy" id="521006"/>
    <lineage>
        <taxon>Bacteria</taxon>
        <taxon>Pseudomonadati</taxon>
        <taxon>Pseudomonadota</taxon>
        <taxon>Betaproteobacteria</taxon>
        <taxon>Neisseriales</taxon>
        <taxon>Neisseriaceae</taxon>
        <taxon>Neisseria</taxon>
    </lineage>
</organism>
<accession>B4RQW2</accession>
<gene>
    <name evidence="1" type="primary">rpoB</name>
    <name type="ordered locus">NGK_2420</name>
</gene>
<protein>
    <recommendedName>
        <fullName evidence="1">DNA-directed RNA polymerase subunit beta</fullName>
        <shortName evidence="1">RNAP subunit beta</shortName>
        <ecNumber evidence="1">2.7.7.6</ecNumber>
    </recommendedName>
    <alternativeName>
        <fullName evidence="1">RNA polymerase subunit beta</fullName>
    </alternativeName>
    <alternativeName>
        <fullName evidence="1">Transcriptase subunit beta</fullName>
    </alternativeName>
</protein>
<feature type="chain" id="PRO_1000141715" description="DNA-directed RNA polymerase subunit beta">
    <location>
        <begin position="1"/>
        <end position="1392"/>
    </location>
</feature>
<evidence type="ECO:0000255" key="1">
    <source>
        <dbReference type="HAMAP-Rule" id="MF_01321"/>
    </source>
</evidence>
<keyword id="KW-0240">DNA-directed RNA polymerase</keyword>
<keyword id="KW-0548">Nucleotidyltransferase</keyword>
<keyword id="KW-0804">Transcription</keyword>
<keyword id="KW-0808">Transferase</keyword>
<reference key="1">
    <citation type="journal article" date="2008" name="J. Bacteriol.">
        <title>Complete genome sequence of Neisseria gonorrhoeae NCCP11945.</title>
        <authorList>
            <person name="Chung G.T."/>
            <person name="Yoo J.S."/>
            <person name="Oh H.B."/>
            <person name="Lee Y.S."/>
            <person name="Cha S.H."/>
            <person name="Kim S.J."/>
            <person name="Yoo C.K."/>
        </authorList>
    </citation>
    <scope>NUCLEOTIDE SEQUENCE [LARGE SCALE GENOMIC DNA]</scope>
    <source>
        <strain>NCCP11945</strain>
    </source>
</reference>
<name>RPOB_NEIG2</name>